<proteinExistence type="evidence at protein level"/>
<name>YHAK_ECOLI</name>
<evidence type="ECO:0000269" key="1">
    <source>
    </source>
</evidence>
<evidence type="ECO:0000305" key="2"/>
<evidence type="ECO:0000305" key="3">
    <source>
    </source>
</evidence>
<evidence type="ECO:0007829" key="4">
    <source>
        <dbReference type="PDB" id="2VEC"/>
    </source>
</evidence>
<dbReference type="EMBL" id="U18997">
    <property type="protein sequence ID" value="AAA57910.1"/>
    <property type="molecule type" value="Genomic_DNA"/>
</dbReference>
<dbReference type="EMBL" id="U00096">
    <property type="protein sequence ID" value="AAC76141.1"/>
    <property type="molecule type" value="Genomic_DNA"/>
</dbReference>
<dbReference type="EMBL" id="AP009048">
    <property type="protein sequence ID" value="BAE77156.1"/>
    <property type="molecule type" value="Genomic_DNA"/>
</dbReference>
<dbReference type="PIR" id="G65099">
    <property type="entry name" value="G65099"/>
</dbReference>
<dbReference type="RefSeq" id="NP_417577.1">
    <property type="nucleotide sequence ID" value="NC_000913.3"/>
</dbReference>
<dbReference type="RefSeq" id="WP_000633576.1">
    <property type="nucleotide sequence ID" value="NZ_LN832404.1"/>
</dbReference>
<dbReference type="PDB" id="2VEC">
    <property type="method" value="X-ray"/>
    <property type="resolution" value="1.85 A"/>
    <property type="chains" value="A=2-233"/>
</dbReference>
<dbReference type="PDBsum" id="2VEC"/>
<dbReference type="SMR" id="P42624"/>
<dbReference type="BioGRID" id="4259260">
    <property type="interactions" value="25"/>
</dbReference>
<dbReference type="BioGRID" id="851936">
    <property type="interactions" value="2"/>
</dbReference>
<dbReference type="FunCoup" id="P42624">
    <property type="interactions" value="121"/>
</dbReference>
<dbReference type="IntAct" id="P42624">
    <property type="interactions" value="12"/>
</dbReference>
<dbReference type="STRING" id="511145.b3106"/>
<dbReference type="jPOST" id="P42624"/>
<dbReference type="PaxDb" id="511145-b3106"/>
<dbReference type="DNASU" id="947620"/>
<dbReference type="EnsemblBacteria" id="AAC76141">
    <property type="protein sequence ID" value="AAC76141"/>
    <property type="gene ID" value="b3106"/>
</dbReference>
<dbReference type="GeneID" id="947620"/>
<dbReference type="KEGG" id="ecj:JW3077"/>
<dbReference type="KEGG" id="eco:b3106"/>
<dbReference type="KEGG" id="ecoc:C3026_16955"/>
<dbReference type="PATRIC" id="fig|1411691.4.peg.3622"/>
<dbReference type="EchoBASE" id="EB2606"/>
<dbReference type="eggNOG" id="COG1741">
    <property type="taxonomic scope" value="Bacteria"/>
</dbReference>
<dbReference type="HOGENOM" id="CLU_064194_1_0_6"/>
<dbReference type="InParanoid" id="P42624"/>
<dbReference type="OMA" id="KADYGWL"/>
<dbReference type="OrthoDB" id="6495595at2"/>
<dbReference type="PhylomeDB" id="P42624"/>
<dbReference type="BioCyc" id="EcoCyc:G7620-MONOMER"/>
<dbReference type="EvolutionaryTrace" id="P42624"/>
<dbReference type="PRO" id="PR:P42624"/>
<dbReference type="Proteomes" id="UP000000625">
    <property type="component" value="Chromosome"/>
</dbReference>
<dbReference type="GO" id="GO:0005737">
    <property type="term" value="C:cytoplasm"/>
    <property type="evidence" value="ECO:0007669"/>
    <property type="project" value="UniProtKB-SubCell"/>
</dbReference>
<dbReference type="CDD" id="cd20311">
    <property type="entry name" value="cupin_Yhhw_C"/>
    <property type="match status" value="1"/>
</dbReference>
<dbReference type="Gene3D" id="2.60.120.10">
    <property type="entry name" value="Jelly Rolls"/>
    <property type="match status" value="2"/>
</dbReference>
<dbReference type="InterPro" id="IPR012093">
    <property type="entry name" value="Pirin"/>
</dbReference>
<dbReference type="InterPro" id="IPR003829">
    <property type="entry name" value="Pirin_N_dom"/>
</dbReference>
<dbReference type="InterPro" id="IPR041602">
    <property type="entry name" value="Quercetinase_C"/>
</dbReference>
<dbReference type="InterPro" id="IPR014710">
    <property type="entry name" value="RmlC-like_jellyroll"/>
</dbReference>
<dbReference type="InterPro" id="IPR011051">
    <property type="entry name" value="RmlC_Cupin_sf"/>
</dbReference>
<dbReference type="PANTHER" id="PTHR43212:SF2">
    <property type="entry name" value="PIRIN-LIKE PROTEIN YHAK"/>
    <property type="match status" value="1"/>
</dbReference>
<dbReference type="PANTHER" id="PTHR43212">
    <property type="entry name" value="QUERCETIN 2,3-DIOXYGENASE"/>
    <property type="match status" value="1"/>
</dbReference>
<dbReference type="Pfam" id="PF02678">
    <property type="entry name" value="Pirin"/>
    <property type="match status" value="1"/>
</dbReference>
<dbReference type="Pfam" id="PF17954">
    <property type="entry name" value="Pirin_C_2"/>
    <property type="match status" value="1"/>
</dbReference>
<dbReference type="PIRSF" id="PIRSF006232">
    <property type="entry name" value="Pirin"/>
    <property type="match status" value="1"/>
</dbReference>
<dbReference type="SUPFAM" id="SSF51182">
    <property type="entry name" value="RmlC-like cupins"/>
    <property type="match status" value="1"/>
</dbReference>
<gene>
    <name type="primary">yhaK</name>
    <name type="ordered locus">b3106</name>
    <name type="ordered locus">JW3077</name>
</gene>
<accession>P42624</accession>
<accession>Q2M9A0</accession>
<feature type="chain" id="PRO_0000214061" description="Pirin-like protein YhaK">
    <location>
        <begin position="1"/>
        <end position="233"/>
    </location>
</feature>
<feature type="strand" evidence="4">
    <location>
        <begin position="11"/>
        <end position="13"/>
    </location>
</feature>
<feature type="helix" evidence="4">
    <location>
        <begin position="17"/>
        <end position="19"/>
    </location>
</feature>
<feature type="strand" evidence="4">
    <location>
        <begin position="22"/>
        <end position="25"/>
    </location>
</feature>
<feature type="strand" evidence="4">
    <location>
        <begin position="40"/>
        <end position="48"/>
    </location>
</feature>
<feature type="strand" evidence="4">
    <location>
        <begin position="53"/>
        <end position="57"/>
    </location>
</feature>
<feature type="strand" evidence="4">
    <location>
        <begin position="60"/>
        <end position="77"/>
    </location>
</feature>
<feature type="strand" evidence="4">
    <location>
        <begin position="82"/>
        <end position="86"/>
    </location>
</feature>
<feature type="strand" evidence="4">
    <location>
        <begin position="89"/>
        <end position="93"/>
    </location>
</feature>
<feature type="strand" evidence="4">
    <location>
        <begin position="101"/>
        <end position="105"/>
    </location>
</feature>
<feature type="strand" evidence="4">
    <location>
        <begin position="108"/>
        <end position="110"/>
    </location>
</feature>
<feature type="strand" evidence="4">
    <location>
        <begin position="112"/>
        <end position="120"/>
    </location>
</feature>
<feature type="strand" evidence="4">
    <location>
        <begin position="129"/>
        <end position="134"/>
    </location>
</feature>
<feature type="strand" evidence="4">
    <location>
        <begin position="138"/>
        <end position="147"/>
    </location>
</feature>
<feature type="helix" evidence="4">
    <location>
        <begin position="149"/>
        <end position="151"/>
    </location>
</feature>
<feature type="strand" evidence="4">
    <location>
        <begin position="156"/>
        <end position="158"/>
    </location>
</feature>
<feature type="strand" evidence="4">
    <location>
        <begin position="160"/>
        <end position="166"/>
    </location>
</feature>
<feature type="strand" evidence="4">
    <location>
        <begin position="171"/>
        <end position="175"/>
    </location>
</feature>
<feature type="strand" evidence="4">
    <location>
        <begin position="177"/>
        <end position="188"/>
    </location>
</feature>
<feature type="strand" evidence="4">
    <location>
        <begin position="190"/>
        <end position="194"/>
    </location>
</feature>
<feature type="strand" evidence="4">
    <location>
        <begin position="197"/>
        <end position="202"/>
    </location>
</feature>
<feature type="strand" evidence="4">
    <location>
        <begin position="207"/>
        <end position="212"/>
    </location>
</feature>
<feature type="strand" evidence="4">
    <location>
        <begin position="214"/>
        <end position="231"/>
    </location>
</feature>
<comment type="function">
    <text evidence="1">Does not have quercetin 2,3-dioxygenase activity.</text>
</comment>
<comment type="subunit">
    <text evidence="1">Monomer.</text>
</comment>
<comment type="subcellular location">
    <subcellularLocation>
        <location evidence="3">Cytoplasm</location>
    </subcellularLocation>
</comment>
<comment type="miscellaneous">
    <text>Contains Cys residues that are easily oxidized.</text>
</comment>
<comment type="similarity">
    <text evidence="2">Belongs to the pirin family.</text>
</comment>
<comment type="caution">
    <text evidence="2">Lacks the conserved His residues required for metal binding. Its function must therefore be different from the metal-dependent roles proposed for other family members.</text>
</comment>
<protein>
    <recommendedName>
        <fullName>Pirin-like protein YhaK</fullName>
    </recommendedName>
</protein>
<reference key="1">
    <citation type="journal article" date="1997" name="Science">
        <title>The complete genome sequence of Escherichia coli K-12.</title>
        <authorList>
            <person name="Blattner F.R."/>
            <person name="Plunkett G. III"/>
            <person name="Bloch C.A."/>
            <person name="Perna N.T."/>
            <person name="Burland V."/>
            <person name="Riley M."/>
            <person name="Collado-Vides J."/>
            <person name="Glasner J.D."/>
            <person name="Rode C.K."/>
            <person name="Mayhew G.F."/>
            <person name="Gregor J."/>
            <person name="Davis N.W."/>
            <person name="Kirkpatrick H.A."/>
            <person name="Goeden M.A."/>
            <person name="Rose D.J."/>
            <person name="Mau B."/>
            <person name="Shao Y."/>
        </authorList>
    </citation>
    <scope>NUCLEOTIDE SEQUENCE [LARGE SCALE GENOMIC DNA]</scope>
    <source>
        <strain>K12 / MG1655 / ATCC 47076</strain>
    </source>
</reference>
<reference key="2">
    <citation type="journal article" date="2006" name="Mol. Syst. Biol.">
        <title>Highly accurate genome sequences of Escherichia coli K-12 strains MG1655 and W3110.</title>
        <authorList>
            <person name="Hayashi K."/>
            <person name="Morooka N."/>
            <person name="Yamamoto Y."/>
            <person name="Fujita K."/>
            <person name="Isono K."/>
            <person name="Choi S."/>
            <person name="Ohtsubo E."/>
            <person name="Baba T."/>
            <person name="Wanner B.L."/>
            <person name="Mori H."/>
            <person name="Horiuchi T."/>
        </authorList>
    </citation>
    <scope>NUCLEOTIDE SEQUENCE [LARGE SCALE GENOMIC DNA]</scope>
    <source>
        <strain>K12 / W3110 / ATCC 27325 / DSM 5911</strain>
    </source>
</reference>
<reference key="3">
    <citation type="journal article" date="2009" name="Proteins">
        <title>The crystal structure of the protein YhaK from Escherichia coli reveals a new subclass of redox sensitive enterobacterial bicupins.</title>
        <authorList>
            <person name="Gurmu D."/>
            <person name="Lu J."/>
            <person name="Johnson K.A."/>
            <person name="Nordlund P."/>
            <person name="Holmgren A."/>
            <person name="Erlandsen H."/>
        </authorList>
    </citation>
    <scope>X-RAY CRYSTALLOGRAPHY (1.85 ANGSTROMS)</scope>
    <scope>FUNCTION</scope>
    <scope>SUBUNIT</scope>
    <scope>SUBCELLULAR LOCATION</scope>
    <scope>LACK OF QUERCETINASE ACTIVITY</scope>
</reference>
<keyword id="KW-0002">3D-structure</keyword>
<keyword id="KW-0963">Cytoplasm</keyword>
<keyword id="KW-1185">Reference proteome</keyword>
<sequence>MITTRTARQCGQADYGWLQARYTFSFGHYFDPKLLGYASLRVLNQEVLAPGAAFQPRTYPKVDILNVILDGEAEYRDSEGNHVQASAGEALLLSTQPGVSYSEHNLSKDKPLTRMQLWLDACPQRENPLIQKLALNMGKQQLIASPEGAMGSLQLRQQVWLHHIVLDKGESANFQLHGPRAYLQSIHGKFHALTHHEEKAALTCGDGAFIRDEANITLVADSPLRALLIDLPV</sequence>
<organism>
    <name type="scientific">Escherichia coli (strain K12)</name>
    <dbReference type="NCBI Taxonomy" id="83333"/>
    <lineage>
        <taxon>Bacteria</taxon>
        <taxon>Pseudomonadati</taxon>
        <taxon>Pseudomonadota</taxon>
        <taxon>Gammaproteobacteria</taxon>
        <taxon>Enterobacterales</taxon>
        <taxon>Enterobacteriaceae</taxon>
        <taxon>Escherichia</taxon>
    </lineage>
</organism>